<sequence length="13" mass="1435">AFCCPSGWSAYDQ</sequence>
<proteinExistence type="evidence at protein level"/>
<name>SLLC2_VIPAP</name>
<protein>
    <recommendedName>
        <fullName>Snaclec coagulation factor X-activating enzyme light chain 2</fullName>
    </recommendedName>
    <alternativeName>
        <fullName>Factor X activator LC2</fullName>
    </alternativeName>
</protein>
<accession>Q7LZ24</accession>
<feature type="chain" id="PRO_0000408029" description="Snaclec coagulation factor X-activating enzyme light chain 2">
    <location>
        <begin position="1"/>
        <end position="13" status="greater than"/>
    </location>
</feature>
<feature type="domain" description="C-type lectin" evidence="2">
    <location>
        <begin position="11"/>
        <end position="13" status="greater than"/>
    </location>
</feature>
<feature type="non-terminal residue">
    <location>
        <position position="13"/>
    </location>
</feature>
<reference key="1">
    <citation type="journal article" date="1990" name="Int. J. Biochem.">
        <title>Isolation and characterization of factor X activator from the venom of Vipera aspis aspis.</title>
        <authorList>
            <person name="Komori Y."/>
            <person name="Nikai T."/>
            <person name="Sugihara H."/>
        </authorList>
    </citation>
    <scope>PROTEIN SEQUENCE</scope>
    <source>
        <tissue>Venom</tissue>
    </source>
</reference>
<evidence type="ECO:0000250" key="1"/>
<evidence type="ECO:0000255" key="2">
    <source>
        <dbReference type="PROSITE-ProRule" id="PRU00040"/>
    </source>
</evidence>
<evidence type="ECO:0000305" key="3"/>
<keyword id="KW-1204">Blood coagulation cascade activating toxin</keyword>
<keyword id="KW-0106">Calcium</keyword>
<keyword id="KW-0903">Direct protein sequencing</keyword>
<keyword id="KW-1015">Disulfide bond</keyword>
<keyword id="KW-0325">Glycoprotein</keyword>
<keyword id="KW-1199">Hemostasis impairing toxin</keyword>
<keyword id="KW-0430">Lectin</keyword>
<keyword id="KW-0479">Metal-binding</keyword>
<keyword id="KW-0964">Secreted</keyword>
<keyword id="KW-0800">Toxin</keyword>
<dbReference type="PIR" id="A60379">
    <property type="entry name" value="A60379"/>
</dbReference>
<dbReference type="GO" id="GO:0005576">
    <property type="term" value="C:extracellular region"/>
    <property type="evidence" value="ECO:0007669"/>
    <property type="project" value="UniProtKB-SubCell"/>
</dbReference>
<dbReference type="GO" id="GO:0030246">
    <property type="term" value="F:carbohydrate binding"/>
    <property type="evidence" value="ECO:0007669"/>
    <property type="project" value="UniProtKB-KW"/>
</dbReference>
<dbReference type="GO" id="GO:0046872">
    <property type="term" value="F:metal ion binding"/>
    <property type="evidence" value="ECO:0007669"/>
    <property type="project" value="UniProtKB-KW"/>
</dbReference>
<dbReference type="GO" id="GO:0090729">
    <property type="term" value="F:toxin activity"/>
    <property type="evidence" value="ECO:0007669"/>
    <property type="project" value="UniProtKB-KW"/>
</dbReference>
<organism>
    <name type="scientific">Vipera aspis aspis</name>
    <name type="common">Aspic viper</name>
    <dbReference type="NCBI Taxonomy" id="194601"/>
    <lineage>
        <taxon>Eukaryota</taxon>
        <taxon>Metazoa</taxon>
        <taxon>Chordata</taxon>
        <taxon>Craniata</taxon>
        <taxon>Vertebrata</taxon>
        <taxon>Euteleostomi</taxon>
        <taxon>Lepidosauria</taxon>
        <taxon>Squamata</taxon>
        <taxon>Bifurcata</taxon>
        <taxon>Unidentata</taxon>
        <taxon>Episquamata</taxon>
        <taxon>Toxicofera</taxon>
        <taxon>Serpentes</taxon>
        <taxon>Colubroidea</taxon>
        <taxon>Viperidae</taxon>
        <taxon>Viperinae</taxon>
        <taxon>Vipera</taxon>
    </lineage>
</organism>
<comment type="function">
    <text>Regulatory subunit of coagulation factor X-activating enzyme, a zinc-protease enzyme that impairs hemostasis in envenomed animal. Activates coagulation factor X (F10) in a calcium-dependent manner probably by cleaving the Arg-Ile bond at position 234.</text>
</comment>
<comment type="subunit">
    <text evidence="1">Heterotrimer; disulfide-linked. The heterotrimer consists of 1 heavy chain (a metalloproteinase) and 2 light chains: LC1 and LC2 (By similarity).</text>
</comment>
<comment type="subcellular location">
    <subcellularLocation>
        <location>Secreted</location>
    </subcellularLocation>
</comment>
<comment type="tissue specificity">
    <text>Expressed by the venom gland.</text>
</comment>
<comment type="PTM">
    <text evidence="1">N-glycosylated.</text>
</comment>
<comment type="miscellaneous">
    <text>Calcium is required for ligand binding.</text>
</comment>
<comment type="miscellaneous">
    <text>The molecular weight was determined to be 75 kDa with an isoelectric point of 4.6. Upon reduction, this activator migrated as two bands of 16 kDa and 14 kDa.</text>
</comment>
<comment type="similarity">
    <text evidence="3">Belongs to the snaclec family.</text>
</comment>